<dbReference type="EC" id="3.4.21.-"/>
<dbReference type="EMBL" id="D67084">
    <property type="protein sequence ID" value="BAA19982.1"/>
    <property type="molecule type" value="mRNA"/>
</dbReference>
<dbReference type="SMR" id="O13062"/>
<dbReference type="GlyCosmos" id="O13062">
    <property type="glycosylation" value="3 sites, No reported glycans"/>
</dbReference>
<dbReference type="GO" id="GO:0005576">
    <property type="term" value="C:extracellular region"/>
    <property type="evidence" value="ECO:0007669"/>
    <property type="project" value="UniProtKB-SubCell"/>
</dbReference>
<dbReference type="GO" id="GO:0030141">
    <property type="term" value="C:secretory granule"/>
    <property type="evidence" value="ECO:0007669"/>
    <property type="project" value="TreeGrafter"/>
</dbReference>
<dbReference type="GO" id="GO:0004252">
    <property type="term" value="F:serine-type endopeptidase activity"/>
    <property type="evidence" value="ECO:0007669"/>
    <property type="project" value="InterPro"/>
</dbReference>
<dbReference type="GO" id="GO:0090729">
    <property type="term" value="F:toxin activity"/>
    <property type="evidence" value="ECO:0007669"/>
    <property type="project" value="UniProtKB-KW"/>
</dbReference>
<dbReference type="GO" id="GO:0006508">
    <property type="term" value="P:proteolysis"/>
    <property type="evidence" value="ECO:0007669"/>
    <property type="project" value="UniProtKB-KW"/>
</dbReference>
<dbReference type="CDD" id="cd00190">
    <property type="entry name" value="Tryp_SPc"/>
    <property type="match status" value="1"/>
</dbReference>
<dbReference type="FunFam" id="2.40.10.10:FF:000158">
    <property type="entry name" value="Thrombin-like enzyme saxthrombin"/>
    <property type="match status" value="1"/>
</dbReference>
<dbReference type="FunFam" id="2.40.10.10:FF:000153">
    <property type="entry name" value="Venom plasminogen activator TSV-PA"/>
    <property type="match status" value="1"/>
</dbReference>
<dbReference type="Gene3D" id="2.40.10.10">
    <property type="entry name" value="Trypsin-like serine proteases"/>
    <property type="match status" value="2"/>
</dbReference>
<dbReference type="InterPro" id="IPR009003">
    <property type="entry name" value="Peptidase_S1_PA"/>
</dbReference>
<dbReference type="InterPro" id="IPR043504">
    <property type="entry name" value="Peptidase_S1_PA_chymotrypsin"/>
</dbReference>
<dbReference type="InterPro" id="IPR001314">
    <property type="entry name" value="Peptidase_S1A"/>
</dbReference>
<dbReference type="InterPro" id="IPR001254">
    <property type="entry name" value="Trypsin_dom"/>
</dbReference>
<dbReference type="InterPro" id="IPR018114">
    <property type="entry name" value="TRYPSIN_HIS"/>
</dbReference>
<dbReference type="InterPro" id="IPR033116">
    <property type="entry name" value="TRYPSIN_SER"/>
</dbReference>
<dbReference type="PANTHER" id="PTHR24271:SF47">
    <property type="entry name" value="KALLIKREIN-1"/>
    <property type="match status" value="1"/>
</dbReference>
<dbReference type="PANTHER" id="PTHR24271">
    <property type="entry name" value="KALLIKREIN-RELATED"/>
    <property type="match status" value="1"/>
</dbReference>
<dbReference type="Pfam" id="PF00089">
    <property type="entry name" value="Trypsin"/>
    <property type="match status" value="1"/>
</dbReference>
<dbReference type="PRINTS" id="PR00722">
    <property type="entry name" value="CHYMOTRYPSIN"/>
</dbReference>
<dbReference type="SMART" id="SM00020">
    <property type="entry name" value="Tryp_SPc"/>
    <property type="match status" value="1"/>
</dbReference>
<dbReference type="SUPFAM" id="SSF50494">
    <property type="entry name" value="Trypsin-like serine proteases"/>
    <property type="match status" value="1"/>
</dbReference>
<dbReference type="PROSITE" id="PS50240">
    <property type="entry name" value="TRYPSIN_DOM"/>
    <property type="match status" value="1"/>
</dbReference>
<dbReference type="PROSITE" id="PS00134">
    <property type="entry name" value="TRYPSIN_HIS"/>
    <property type="match status" value="1"/>
</dbReference>
<dbReference type="PROSITE" id="PS00135">
    <property type="entry name" value="TRYPSIN_SER"/>
    <property type="match status" value="1"/>
</dbReference>
<organism>
    <name type="scientific">Craspedocephalus gramineus</name>
    <name type="common">Bamboo pit viper</name>
    <name type="synonym">Trimeresurus gramineus</name>
    <dbReference type="NCBI Taxonomy" id="8767"/>
    <lineage>
        <taxon>Eukaryota</taxon>
        <taxon>Metazoa</taxon>
        <taxon>Chordata</taxon>
        <taxon>Craniata</taxon>
        <taxon>Vertebrata</taxon>
        <taxon>Euteleostomi</taxon>
        <taxon>Lepidosauria</taxon>
        <taxon>Squamata</taxon>
        <taxon>Bifurcata</taxon>
        <taxon>Unidentata</taxon>
        <taxon>Episquamata</taxon>
        <taxon>Toxicofera</taxon>
        <taxon>Serpentes</taxon>
        <taxon>Colubroidea</taxon>
        <taxon>Viperidae</taxon>
        <taxon>Crotalinae</taxon>
        <taxon>Craspedocephalus</taxon>
    </lineage>
</organism>
<comment type="function">
    <text evidence="1">Snake venom serine protease that may act in the hemostasis system of the prey.</text>
</comment>
<comment type="subunit">
    <text evidence="1">Monomer.</text>
</comment>
<comment type="subcellular location">
    <subcellularLocation>
        <location>Secreted</location>
    </subcellularLocation>
</comment>
<comment type="tissue specificity">
    <text>Expressed by the venom gland.</text>
</comment>
<comment type="similarity">
    <text evidence="3">Belongs to the peptidase S1 family. Snake venom subfamily.</text>
</comment>
<name>VSPC_CRAGM</name>
<evidence type="ECO:0000250" key="1"/>
<evidence type="ECO:0000255" key="2"/>
<evidence type="ECO:0000255" key="3">
    <source>
        <dbReference type="PROSITE-ProRule" id="PRU00274"/>
    </source>
</evidence>
<proteinExistence type="evidence at transcript level"/>
<reference key="1">
    <citation type="journal article" date="1996" name="FEBS Lett.">
        <title>Accelerated evolution of crotalinae snake venom gland serine proteases.</title>
        <authorList>
            <person name="Deshimaru M."/>
            <person name="Ogawa T."/>
            <person name="Nakashima K."/>
            <person name="Nobuhisa I."/>
            <person name="Chijiwa T."/>
            <person name="Shimohigashi Y."/>
            <person name="Fukumaki Y."/>
            <person name="Niwa M."/>
            <person name="Yamashina I."/>
            <person name="Hattori S."/>
            <person name="Ohno M."/>
        </authorList>
    </citation>
    <scope>NUCLEOTIDE SEQUENCE [MRNA]</scope>
    <source>
        <tissue>Venom gland</tissue>
    </source>
</reference>
<accession>O13062</accession>
<keyword id="KW-1015">Disulfide bond</keyword>
<keyword id="KW-0325">Glycoprotein</keyword>
<keyword id="KW-1199">Hemostasis impairing toxin</keyword>
<keyword id="KW-0378">Hydrolase</keyword>
<keyword id="KW-0645">Protease</keyword>
<keyword id="KW-0964">Secreted</keyword>
<keyword id="KW-0720">Serine protease</keyword>
<keyword id="KW-0732">Signal</keyword>
<keyword id="KW-0800">Toxin</keyword>
<keyword id="KW-0865">Zymogen</keyword>
<protein>
    <recommendedName>
        <fullName>Snake venom serine protease 2C</fullName>
        <shortName>SVSP 2C</shortName>
        <ecNumber>3.4.21.-</ecNumber>
    </recommendedName>
</protein>
<gene>
    <name type="primary">TLG2C</name>
</gene>
<sequence>MVLIRVLANLLILQLSYAQKSSELVIGGHPCNINEHPFLVLVYHDGYQCGGTLINEEWVLTAAHCDGKKMKLQFGLHSKNVPNKDKQTRVPKEKFFCLSSKNFIKWGKDIMLIRLNRSVNNSTHIAPLSLPSSPPSQNTVCNIMGWGTISPTKEIYPDVPHCANINILDHAVCRAFYPGLLEKSKTLCAGILQGGKDICQGDSGGPLICNGQIQGIVSVGGNPCAEPRVPAIYTKVFDHLDWIKSIIAGNTAATCPL</sequence>
<feature type="signal peptide" evidence="1">
    <location>
        <begin position="1"/>
        <end position="18"/>
    </location>
</feature>
<feature type="propeptide" id="PRO_0000028397" evidence="1">
    <location>
        <begin position="19"/>
        <end position="24"/>
    </location>
</feature>
<feature type="chain" id="PRO_0000028398" description="Snake venom serine protease 2C">
    <location>
        <begin position="25"/>
        <end position="257"/>
    </location>
</feature>
<feature type="domain" description="Peptidase S1" evidence="3">
    <location>
        <begin position="25"/>
        <end position="248"/>
    </location>
</feature>
<feature type="active site" description="Charge relay system" evidence="1">
    <location>
        <position position="64"/>
    </location>
</feature>
<feature type="active site" description="Charge relay system" evidence="1">
    <location>
        <position position="109"/>
    </location>
</feature>
<feature type="active site" description="Charge relay system" evidence="1">
    <location>
        <position position="203"/>
    </location>
</feature>
<feature type="glycosylation site" description="N-linked (GlcNAc...) asparagine" evidence="2">
    <location>
        <position position="116"/>
    </location>
</feature>
<feature type="glycosylation site" description="N-linked (GlcNAc...) asparagine" evidence="2">
    <location>
        <position position="120"/>
    </location>
</feature>
<feature type="glycosylation site" description="N-linked (GlcNAc...) asparagine" evidence="2">
    <location>
        <position position="121"/>
    </location>
</feature>
<feature type="disulfide bond" evidence="3">
    <location>
        <begin position="31"/>
        <end position="162"/>
    </location>
</feature>
<feature type="disulfide bond" evidence="3">
    <location>
        <begin position="49"/>
        <end position="65"/>
    </location>
</feature>
<feature type="disulfide bond" evidence="3">
    <location>
        <begin position="97"/>
        <end position="255"/>
    </location>
</feature>
<feature type="disulfide bond" evidence="3">
    <location>
        <begin position="141"/>
        <end position="209"/>
    </location>
</feature>
<feature type="disulfide bond" evidence="3">
    <location>
        <begin position="173"/>
        <end position="188"/>
    </location>
</feature>
<feature type="disulfide bond" evidence="3">
    <location>
        <begin position="199"/>
        <end position="224"/>
    </location>
</feature>